<dbReference type="EC" id="2.-.-.-"/>
<dbReference type="EMBL" id="L42023">
    <property type="protein sequence ID" value="AAC21924.1"/>
    <property type="molecule type" value="Genomic_DNA"/>
</dbReference>
<dbReference type="PIR" id="C64146">
    <property type="entry name" value="C64146"/>
</dbReference>
<dbReference type="RefSeq" id="NP_438427.1">
    <property type="nucleotide sequence ID" value="NC_000907.1"/>
</dbReference>
<dbReference type="SMR" id="P43974"/>
<dbReference type="STRING" id="71421.HI_0258"/>
<dbReference type="CAZy" id="GT8">
    <property type="family name" value="Glycosyltransferase Family 8"/>
</dbReference>
<dbReference type="EnsemblBacteria" id="AAC21924">
    <property type="protein sequence ID" value="AAC21924"/>
    <property type="gene ID" value="HI_0258"/>
</dbReference>
<dbReference type="KEGG" id="hin:HI_0258"/>
<dbReference type="PATRIC" id="fig|71421.8.peg.273"/>
<dbReference type="eggNOG" id="COG1442">
    <property type="taxonomic scope" value="Bacteria"/>
</dbReference>
<dbReference type="HOGENOM" id="CLU_050833_0_2_6"/>
<dbReference type="OrthoDB" id="9807549at2"/>
<dbReference type="PhylomeDB" id="P43974"/>
<dbReference type="BioCyc" id="HINF71421:G1GJ1-273-MONOMER"/>
<dbReference type="Proteomes" id="UP000000579">
    <property type="component" value="Chromosome"/>
</dbReference>
<dbReference type="GO" id="GO:0016757">
    <property type="term" value="F:glycosyltransferase activity"/>
    <property type="evidence" value="ECO:0007669"/>
    <property type="project" value="UniProtKB-KW"/>
</dbReference>
<dbReference type="GO" id="GO:0046872">
    <property type="term" value="F:metal ion binding"/>
    <property type="evidence" value="ECO:0007669"/>
    <property type="project" value="UniProtKB-KW"/>
</dbReference>
<dbReference type="CDD" id="cd04194">
    <property type="entry name" value="GT8_A4GalT_like"/>
    <property type="match status" value="1"/>
</dbReference>
<dbReference type="Gene3D" id="3.90.550.10">
    <property type="entry name" value="Spore Coat Polysaccharide Biosynthesis Protein SpsA, Chain A"/>
    <property type="match status" value="1"/>
</dbReference>
<dbReference type="InterPro" id="IPR002495">
    <property type="entry name" value="Glyco_trans_8"/>
</dbReference>
<dbReference type="InterPro" id="IPR050748">
    <property type="entry name" value="Glycosyltrans_8_dom-fam"/>
</dbReference>
<dbReference type="InterPro" id="IPR029044">
    <property type="entry name" value="Nucleotide-diphossugar_trans"/>
</dbReference>
<dbReference type="PANTHER" id="PTHR13778">
    <property type="entry name" value="GLYCOSYLTRANSFERASE 8 DOMAIN-CONTAINING PROTEIN"/>
    <property type="match status" value="1"/>
</dbReference>
<dbReference type="PANTHER" id="PTHR13778:SF47">
    <property type="entry name" value="LIPOPOLYSACCHARIDE 1,3-GALACTOSYLTRANSFERASE"/>
    <property type="match status" value="1"/>
</dbReference>
<dbReference type="Pfam" id="PF01501">
    <property type="entry name" value="Glyco_transf_8"/>
    <property type="match status" value="1"/>
</dbReference>
<dbReference type="SUPFAM" id="SSF53448">
    <property type="entry name" value="Nucleotide-diphospho-sugar transferases"/>
    <property type="match status" value="1"/>
</dbReference>
<evidence type="ECO:0000250" key="1">
    <source>
        <dbReference type="UniProtKB" id="A0A0H2URJ6"/>
    </source>
</evidence>
<evidence type="ECO:0000256" key="2">
    <source>
        <dbReference type="SAM" id="MobiDB-lite"/>
    </source>
</evidence>
<evidence type="ECO:0000305" key="3"/>
<organism>
    <name type="scientific">Haemophilus influenzae (strain ATCC 51907 / DSM 11121 / KW20 / Rd)</name>
    <dbReference type="NCBI Taxonomy" id="71421"/>
    <lineage>
        <taxon>Bacteria</taxon>
        <taxon>Pseudomonadati</taxon>
        <taxon>Pseudomonadota</taxon>
        <taxon>Gammaproteobacteria</taxon>
        <taxon>Pasteurellales</taxon>
        <taxon>Pasteurellaceae</taxon>
        <taxon>Haemophilus</taxon>
    </lineage>
</organism>
<comment type="similarity">
    <text evidence="3">Belongs to the glycosyltransferase 8 family.</text>
</comment>
<sequence length="330" mass="39073">MTDRQTDRQTDRQTDRQTDRQTDRQTDRQTDGRTVSQTMNIIFSSDHYYAPYLAVSIFSIIKNTPKKINFYILDMKINQENKTIINNLASAYSCKVFFLPVCESDFQNFPKTIDYISLATYARLNLTKYIKNIEKAIYIDVDTLTNSSLQELWNIDITNYYLAACRDTFIDVKNEAYKKTIGLEGYSYFNAGILLINLNKWKEENIFQKSINWMNKYNNVMKYQDQDILNGICKGKVKFINNRFNFTPTDRDLIKKKNLLCVKMPIVISHYCGPNKFWHKKCSHLNCHIGNLLLKEMDKIIDIPSSWYDHFEKIPFLIKIKRLRKRIKDN</sequence>
<keyword id="KW-0328">Glycosyltransferase</keyword>
<keyword id="KW-0464">Manganese</keyword>
<keyword id="KW-0479">Metal-binding</keyword>
<keyword id="KW-1185">Reference proteome</keyword>
<keyword id="KW-0808">Transferase</keyword>
<protein>
    <recommendedName>
        <fullName>Putative glycosyltransferase HI_0258</fullName>
        <ecNumber>2.-.-.-</ecNumber>
    </recommendedName>
</protein>
<proteinExistence type="inferred from homology"/>
<reference key="1">
    <citation type="journal article" date="1995" name="Science">
        <title>Whole-genome random sequencing and assembly of Haemophilus influenzae Rd.</title>
        <authorList>
            <person name="Fleischmann R.D."/>
            <person name="Adams M.D."/>
            <person name="White O."/>
            <person name="Clayton R.A."/>
            <person name="Kirkness E.F."/>
            <person name="Kerlavage A.R."/>
            <person name="Bult C.J."/>
            <person name="Tomb J.-F."/>
            <person name="Dougherty B.A."/>
            <person name="Merrick J.M."/>
            <person name="McKenney K."/>
            <person name="Sutton G.G."/>
            <person name="FitzHugh W."/>
            <person name="Fields C.A."/>
            <person name="Gocayne J.D."/>
            <person name="Scott J.D."/>
            <person name="Shirley R."/>
            <person name="Liu L.-I."/>
            <person name="Glodek A."/>
            <person name="Kelley J.M."/>
            <person name="Weidman J.F."/>
            <person name="Phillips C.A."/>
            <person name="Spriggs T."/>
            <person name="Hedblom E."/>
            <person name="Cotton M.D."/>
            <person name="Utterback T.R."/>
            <person name="Hanna M.C."/>
            <person name="Nguyen D.T."/>
            <person name="Saudek D.M."/>
            <person name="Brandon R.C."/>
            <person name="Fine L.D."/>
            <person name="Fritchman J.L."/>
            <person name="Fuhrmann J.L."/>
            <person name="Geoghagen N.S.M."/>
            <person name="Gnehm C.L."/>
            <person name="McDonald L.A."/>
            <person name="Small K.V."/>
            <person name="Fraser C.M."/>
            <person name="Smith H.O."/>
            <person name="Venter J.C."/>
        </authorList>
    </citation>
    <scope>NUCLEOTIDE SEQUENCE [LARGE SCALE GENOMIC DNA]</scope>
    <source>
        <strain>ATCC 51907 / DSM 11121 / KW20 / Rd</strain>
    </source>
</reference>
<reference key="2">
    <citation type="submission" date="1996-09" db="EMBL/GenBank/DDBJ databases">
        <authorList>
            <person name="White O."/>
            <person name="Clayton R.A."/>
            <person name="Kerlavage A.R."/>
            <person name="Fleischmann R.D."/>
        </authorList>
    </citation>
    <scope>SEQUENCE REVISION</scope>
</reference>
<feature type="chain" id="PRO_0000206068" description="Putative glycosyltransferase HI_0258">
    <location>
        <begin position="1"/>
        <end position="330"/>
    </location>
</feature>
<feature type="region of interest" description="Disordered" evidence="2">
    <location>
        <begin position="1"/>
        <end position="32"/>
    </location>
</feature>
<feature type="compositionally biased region" description="Basic and acidic residues" evidence="2">
    <location>
        <begin position="1"/>
        <end position="31"/>
    </location>
</feature>
<feature type="binding site" evidence="1">
    <location>
        <begin position="44"/>
        <end position="49"/>
    </location>
    <ligand>
        <name>UDP</name>
        <dbReference type="ChEBI" id="CHEBI:58223"/>
    </ligand>
</feature>
<feature type="binding site" evidence="1">
    <location>
        <begin position="140"/>
        <end position="141"/>
    </location>
    <ligand>
        <name>UDP</name>
        <dbReference type="ChEBI" id="CHEBI:58223"/>
    </ligand>
</feature>
<feature type="binding site" evidence="1">
    <location>
        <position position="140"/>
    </location>
    <ligand>
        <name>Mn(2+)</name>
        <dbReference type="ChEBI" id="CHEBI:29035"/>
    </ligand>
</feature>
<feature type="binding site" evidence="1">
    <location>
        <position position="142"/>
    </location>
    <ligand>
        <name>Mn(2+)</name>
        <dbReference type="ChEBI" id="CHEBI:29035"/>
    </ligand>
</feature>
<feature type="binding site" evidence="1">
    <location>
        <begin position="270"/>
        <end position="276"/>
    </location>
    <ligand>
        <name>UDP</name>
        <dbReference type="ChEBI" id="CHEBI:58223"/>
    </ligand>
</feature>
<feature type="binding site" evidence="1">
    <location>
        <position position="270"/>
    </location>
    <ligand>
        <name>Mn(2+)</name>
        <dbReference type="ChEBI" id="CHEBI:29035"/>
    </ligand>
</feature>
<name>Y258_HAEIN</name>
<gene>
    <name type="ordered locus">HI_0258</name>
</gene>
<accession>P43974</accession>
<accession>P44597</accession>
<accession>P71347</accession>